<gene>
    <name evidence="2" type="primary">Pate14</name>
    <name type="synonym">Sslp1</name>
</gene>
<organism>
    <name type="scientific">Rattus norvegicus</name>
    <name type="common">Rat</name>
    <dbReference type="NCBI Taxonomy" id="10116"/>
    <lineage>
        <taxon>Eukaryota</taxon>
        <taxon>Metazoa</taxon>
        <taxon>Chordata</taxon>
        <taxon>Craniata</taxon>
        <taxon>Vertebrata</taxon>
        <taxon>Euteleostomi</taxon>
        <taxon>Mammalia</taxon>
        <taxon>Eutheria</taxon>
        <taxon>Euarchontoglires</taxon>
        <taxon>Glires</taxon>
        <taxon>Rodentia</taxon>
        <taxon>Myomorpha</taxon>
        <taxon>Muroidea</taxon>
        <taxon>Muridae</taxon>
        <taxon>Murinae</taxon>
        <taxon>Rattus</taxon>
    </lineage>
</organism>
<protein>
    <recommendedName>
        <fullName evidence="2">Prostate and testis expressed protein 14</fullName>
    </recommendedName>
    <alternativeName>
        <fullName evidence="5">Protein RSP-1</fullName>
    </alternativeName>
    <alternativeName>
        <fullName evidence="2">Secreted seminal-vesicle Ly-6 protein 1</fullName>
        <shortName evidence="2">SSLP-1</shortName>
    </alternativeName>
    <alternativeName>
        <fullName evidence="5">Spleen protein 1</fullName>
    </alternativeName>
</protein>
<comment type="subunit">
    <text evidence="1">Monomer.</text>
</comment>
<comment type="subcellular location">
    <subcellularLocation>
        <location evidence="4">Secreted</location>
    </subcellularLocation>
</comment>
<comment type="similarity">
    <text evidence="6">Belongs to the PATE family.</text>
</comment>
<feature type="signal peptide" evidence="3">
    <location>
        <begin position="1"/>
        <end position="21"/>
    </location>
</feature>
<feature type="chain" id="PRO_0000036174" description="Prostate and testis expressed protein 14">
    <location>
        <begin position="22"/>
        <end position="99"/>
    </location>
</feature>
<feature type="domain" description="UPAR/Ly6" evidence="6">
    <location>
        <begin position="22"/>
        <end position="99"/>
    </location>
</feature>
<feature type="glycosylation site" description="N-linked (GlcNAc...) asparagine" evidence="3">
    <location>
        <position position="40"/>
    </location>
</feature>
<feature type="glycosylation site" description="N-linked (GlcNAc...) asparagine" evidence="3">
    <location>
        <position position="75"/>
    </location>
</feature>
<feature type="glycosylation site" description="N-linked (GlcNAc...) asparagine" evidence="3">
    <location>
        <position position="82"/>
    </location>
</feature>
<feature type="disulfide bond" evidence="3">
    <location>
        <begin position="24"/>
        <end position="51"/>
    </location>
</feature>
<feature type="disulfide bond" evidence="3">
    <location>
        <begin position="27"/>
        <end position="36"/>
    </location>
</feature>
<feature type="disulfide bond" evidence="3">
    <location>
        <begin position="43"/>
        <end position="69"/>
    </location>
</feature>
<feature type="disulfide bond" evidence="3">
    <location>
        <begin position="73"/>
        <end position="89"/>
    </location>
</feature>
<feature type="disulfide bond" evidence="3">
    <location>
        <begin position="90"/>
        <end position="96"/>
    </location>
</feature>
<proteinExistence type="inferred from homology"/>
<sequence length="99" mass="10998">MGKNILLLLLGLSFVIGFLQALRCLECDMLNSDGICEKGNSTCEAKEDQECGILVVSQGVDILFGMQDCSSHCLNKTFHHYNLTLDFTCCHDQSLCNEF</sequence>
<reference key="1">
    <citation type="journal article" date="2002" name="Proteomics">
        <title>The characterisation of novel secreted Ly-6 proteins from rat urine by the combined use of two-dimensional gel electrophoresis, microbore high performance liquid chromatography and expressed sequence tag data.</title>
        <authorList>
            <person name="Southan C."/>
            <person name="Cutler P."/>
            <person name="Birrell H."/>
            <person name="Connell J."/>
            <person name="Fantom K.G.M."/>
            <person name="Sims M."/>
            <person name="Shaikh N."/>
            <person name="Schneider K."/>
        </authorList>
    </citation>
    <scope>NUCLEOTIDE SEQUENCE [MRNA]</scope>
    <scope>SUBCELLULAR LOCATION</scope>
</reference>
<keyword id="KW-1015">Disulfide bond</keyword>
<keyword id="KW-0325">Glycoprotein</keyword>
<keyword id="KW-1185">Reference proteome</keyword>
<keyword id="KW-0964">Secreted</keyword>
<keyword id="KW-0732">Signal</keyword>
<accession>Q9QXN2</accession>
<evidence type="ECO:0000250" key="1"/>
<evidence type="ECO:0000250" key="2">
    <source>
        <dbReference type="UniProtKB" id="Q3UN54"/>
    </source>
</evidence>
<evidence type="ECO:0000255" key="3"/>
<evidence type="ECO:0000269" key="4">
    <source>
    </source>
</evidence>
<evidence type="ECO:0000303" key="5">
    <source>
    </source>
</evidence>
<evidence type="ECO:0000305" key="6"/>
<dbReference type="EMBL" id="AF198442">
    <property type="protein sequence ID" value="AAF15599.1"/>
    <property type="molecule type" value="mRNA"/>
</dbReference>
<dbReference type="RefSeq" id="NP_612546.1">
    <property type="nucleotide sequence ID" value="NM_138537.2"/>
</dbReference>
<dbReference type="SMR" id="Q9QXN2"/>
<dbReference type="STRING" id="10116.ENSRNOP00000011381"/>
<dbReference type="GlyCosmos" id="Q9QXN2">
    <property type="glycosylation" value="3 sites, No reported glycans"/>
</dbReference>
<dbReference type="GlyGen" id="Q9QXN2">
    <property type="glycosylation" value="3 sites"/>
</dbReference>
<dbReference type="PaxDb" id="10116-ENSRNOP00000011381"/>
<dbReference type="Ensembl" id="ENSRNOT00000099536.1">
    <property type="protein sequence ID" value="ENSRNOP00000078877.1"/>
    <property type="gene ID" value="ENSRNOG00000069348.1"/>
</dbReference>
<dbReference type="Ensembl" id="ENSRNOT00000109002.1">
    <property type="protein sequence ID" value="ENSRNOP00000097627.1"/>
    <property type="gene ID" value="ENSRNOG00000063923.1"/>
</dbReference>
<dbReference type="GeneID" id="171573"/>
<dbReference type="KEGG" id="rno:171573"/>
<dbReference type="UCSC" id="RGD:727919">
    <property type="organism name" value="rat"/>
</dbReference>
<dbReference type="AGR" id="RGD:41291770"/>
<dbReference type="AGR" id="RGD:727919"/>
<dbReference type="CTD" id="171573"/>
<dbReference type="RGD" id="727919">
    <property type="gene designation" value="LOC171573"/>
</dbReference>
<dbReference type="eggNOG" id="ENOG502TDW1">
    <property type="taxonomic scope" value="Eukaryota"/>
</dbReference>
<dbReference type="GeneTree" id="ENSGT00940000163158"/>
<dbReference type="HOGENOM" id="CLU_178161_0_0_1"/>
<dbReference type="InParanoid" id="Q9QXN2"/>
<dbReference type="OMA" id="ICTAKEN"/>
<dbReference type="OrthoDB" id="9595010at2759"/>
<dbReference type="PhylomeDB" id="Q9QXN2"/>
<dbReference type="TreeFam" id="TF337781"/>
<dbReference type="PRO" id="PR:Q9QXN2"/>
<dbReference type="Proteomes" id="UP000002494">
    <property type="component" value="Chromosome 8"/>
</dbReference>
<dbReference type="GO" id="GO:0005576">
    <property type="term" value="C:extracellular region"/>
    <property type="evidence" value="ECO:0007669"/>
    <property type="project" value="UniProtKB-SubCell"/>
</dbReference>
<dbReference type="CDD" id="cd23628">
    <property type="entry name" value="TFP_LU_ECD_SP10_like"/>
    <property type="match status" value="1"/>
</dbReference>
<dbReference type="InterPro" id="IPR016054">
    <property type="entry name" value="LY6_UPA_recep-like"/>
</dbReference>
<dbReference type="Pfam" id="PF00021">
    <property type="entry name" value="UPAR_LY6"/>
    <property type="match status" value="1"/>
</dbReference>
<name>PAT14_RAT</name>